<sequence length="510" mass="57526">MNKELVLVVDFGGQYNQLIARRVRENRVYCEIVPYTTSIEDIKEKAPKGIIFTGGPNSVYGENAPRVQKELFDLGIPVLGICYGDQLMAHSLEGEVTSPEKREYGKTDVNLDNSSLLFKDMKEKDQCWMSHTDYISKVPKGFKIIATTDECPCAAMENVEKKLYGVQFHPEVEHTLFGKKMLKNFLFNVCNLKGDWSMSSFAEQQIKAIKEKVGDKKVICALSGGVDSSVAAVIVHKAIGKQLTCIFVDHGLLRKDEGDQVEKIFKDQFDMNLIRVNAQDRFLGKLKGVSDPERKRKIIGEEFIRVFEEEAKKLGNISFLVQGTIYPDIVESGTNTSATIKSHHNVGGLPEDMEFKLIEPLRELFKDEVRAVGEELGIPHKLVWRQPFPGPGLAIRVLGEVTEEKLAITREADAIFREEIAKAGLEEKIWQYFACLPNIQSVGVMGDERTYCHTIALRAVTSSDAMTSDWARIPYEVLDKVSRRIVNEVKEVNRIVYDVTSKPPATIEWE</sequence>
<feature type="chain" id="PRO_1000190233" description="GMP synthase [glutamine-hydrolyzing]">
    <location>
        <begin position="1"/>
        <end position="510"/>
    </location>
</feature>
<feature type="domain" description="Glutamine amidotransferase type-1" evidence="1">
    <location>
        <begin position="5"/>
        <end position="195"/>
    </location>
</feature>
<feature type="domain" description="GMPS ATP-PPase" evidence="1">
    <location>
        <begin position="196"/>
        <end position="385"/>
    </location>
</feature>
<feature type="active site" description="Nucleophile" evidence="1">
    <location>
        <position position="82"/>
    </location>
</feature>
<feature type="active site" evidence="1">
    <location>
        <position position="169"/>
    </location>
</feature>
<feature type="active site" evidence="1">
    <location>
        <position position="171"/>
    </location>
</feature>
<feature type="binding site" evidence="1">
    <location>
        <begin position="223"/>
        <end position="229"/>
    </location>
    <ligand>
        <name>ATP</name>
        <dbReference type="ChEBI" id="CHEBI:30616"/>
    </ligand>
</feature>
<evidence type="ECO:0000255" key="1">
    <source>
        <dbReference type="HAMAP-Rule" id="MF_00344"/>
    </source>
</evidence>
<comment type="function">
    <text evidence="1">Catalyzes the synthesis of GMP from XMP.</text>
</comment>
<comment type="catalytic activity">
    <reaction evidence="1">
        <text>XMP + L-glutamine + ATP + H2O = GMP + L-glutamate + AMP + diphosphate + 2 H(+)</text>
        <dbReference type="Rhea" id="RHEA:11680"/>
        <dbReference type="ChEBI" id="CHEBI:15377"/>
        <dbReference type="ChEBI" id="CHEBI:15378"/>
        <dbReference type="ChEBI" id="CHEBI:29985"/>
        <dbReference type="ChEBI" id="CHEBI:30616"/>
        <dbReference type="ChEBI" id="CHEBI:33019"/>
        <dbReference type="ChEBI" id="CHEBI:57464"/>
        <dbReference type="ChEBI" id="CHEBI:58115"/>
        <dbReference type="ChEBI" id="CHEBI:58359"/>
        <dbReference type="ChEBI" id="CHEBI:456215"/>
        <dbReference type="EC" id="6.3.5.2"/>
    </reaction>
</comment>
<comment type="pathway">
    <text evidence="1">Purine metabolism; GMP biosynthesis; GMP from XMP (L-Gln route): step 1/1.</text>
</comment>
<comment type="subunit">
    <text evidence="1">Homodimer.</text>
</comment>
<keyword id="KW-0067">ATP-binding</keyword>
<keyword id="KW-0315">Glutamine amidotransferase</keyword>
<keyword id="KW-0332">GMP biosynthesis</keyword>
<keyword id="KW-0436">Ligase</keyword>
<keyword id="KW-0547">Nucleotide-binding</keyword>
<keyword id="KW-0658">Purine biosynthesis</keyword>
<accession>C1FLV2</accession>
<name>GUAA_CLOBJ</name>
<proteinExistence type="inferred from homology"/>
<organism>
    <name type="scientific">Clostridium botulinum (strain Kyoto / Type A2)</name>
    <dbReference type="NCBI Taxonomy" id="536232"/>
    <lineage>
        <taxon>Bacteria</taxon>
        <taxon>Bacillati</taxon>
        <taxon>Bacillota</taxon>
        <taxon>Clostridia</taxon>
        <taxon>Eubacteriales</taxon>
        <taxon>Clostridiaceae</taxon>
        <taxon>Clostridium</taxon>
    </lineage>
</organism>
<reference key="1">
    <citation type="submission" date="2008-10" db="EMBL/GenBank/DDBJ databases">
        <title>Genome sequence of Clostridium botulinum A2 Kyoto.</title>
        <authorList>
            <person name="Shrivastava S."/>
            <person name="Brinkac L.M."/>
            <person name="Brown J.L."/>
            <person name="Bruce D."/>
            <person name="Detter C.C."/>
            <person name="Johnson E.A."/>
            <person name="Munk C.A."/>
            <person name="Smith L.A."/>
            <person name="Smith T.J."/>
            <person name="Sutton G."/>
            <person name="Brettin T.S."/>
        </authorList>
    </citation>
    <scope>NUCLEOTIDE SEQUENCE [LARGE SCALE GENOMIC DNA]</scope>
    <source>
        <strain>Kyoto / Type A2</strain>
    </source>
</reference>
<gene>
    <name evidence="1" type="primary">guaA</name>
    <name type="ordered locus">CLM_3728</name>
</gene>
<protein>
    <recommendedName>
        <fullName evidence="1">GMP synthase [glutamine-hydrolyzing]</fullName>
        <ecNumber evidence="1">6.3.5.2</ecNumber>
    </recommendedName>
    <alternativeName>
        <fullName evidence="1">GMP synthetase</fullName>
    </alternativeName>
    <alternativeName>
        <fullName evidence="1">Glutamine amidotransferase</fullName>
    </alternativeName>
</protein>
<dbReference type="EC" id="6.3.5.2" evidence="1"/>
<dbReference type="EMBL" id="CP001581">
    <property type="protein sequence ID" value="ACO87255.1"/>
    <property type="molecule type" value="Genomic_DNA"/>
</dbReference>
<dbReference type="RefSeq" id="WP_012705757.1">
    <property type="nucleotide sequence ID" value="NC_012563.1"/>
</dbReference>
<dbReference type="SMR" id="C1FLV2"/>
<dbReference type="KEGG" id="cby:CLM_3728"/>
<dbReference type="eggNOG" id="COG0518">
    <property type="taxonomic scope" value="Bacteria"/>
</dbReference>
<dbReference type="eggNOG" id="COG0519">
    <property type="taxonomic scope" value="Bacteria"/>
</dbReference>
<dbReference type="HOGENOM" id="CLU_014340_0_5_9"/>
<dbReference type="UniPathway" id="UPA00189">
    <property type="reaction ID" value="UER00296"/>
</dbReference>
<dbReference type="Proteomes" id="UP000001374">
    <property type="component" value="Chromosome"/>
</dbReference>
<dbReference type="GO" id="GO:0005829">
    <property type="term" value="C:cytosol"/>
    <property type="evidence" value="ECO:0007669"/>
    <property type="project" value="TreeGrafter"/>
</dbReference>
<dbReference type="GO" id="GO:0005524">
    <property type="term" value="F:ATP binding"/>
    <property type="evidence" value="ECO:0007669"/>
    <property type="project" value="UniProtKB-UniRule"/>
</dbReference>
<dbReference type="GO" id="GO:0003921">
    <property type="term" value="F:GMP synthase activity"/>
    <property type="evidence" value="ECO:0007669"/>
    <property type="project" value="InterPro"/>
</dbReference>
<dbReference type="CDD" id="cd01742">
    <property type="entry name" value="GATase1_GMP_Synthase"/>
    <property type="match status" value="1"/>
</dbReference>
<dbReference type="CDD" id="cd01997">
    <property type="entry name" value="GMP_synthase_C"/>
    <property type="match status" value="1"/>
</dbReference>
<dbReference type="FunFam" id="3.30.300.10:FF:000002">
    <property type="entry name" value="GMP synthase [glutamine-hydrolyzing]"/>
    <property type="match status" value="1"/>
</dbReference>
<dbReference type="FunFam" id="3.40.50.620:FF:000001">
    <property type="entry name" value="GMP synthase [glutamine-hydrolyzing]"/>
    <property type="match status" value="1"/>
</dbReference>
<dbReference type="FunFam" id="3.40.50.880:FF:000001">
    <property type="entry name" value="GMP synthase [glutamine-hydrolyzing]"/>
    <property type="match status" value="1"/>
</dbReference>
<dbReference type="Gene3D" id="3.30.300.10">
    <property type="match status" value="1"/>
</dbReference>
<dbReference type="Gene3D" id="3.40.50.880">
    <property type="match status" value="1"/>
</dbReference>
<dbReference type="Gene3D" id="3.40.50.620">
    <property type="entry name" value="HUPs"/>
    <property type="match status" value="1"/>
</dbReference>
<dbReference type="HAMAP" id="MF_00344">
    <property type="entry name" value="GMP_synthase"/>
    <property type="match status" value="1"/>
</dbReference>
<dbReference type="InterPro" id="IPR029062">
    <property type="entry name" value="Class_I_gatase-like"/>
</dbReference>
<dbReference type="InterPro" id="IPR017926">
    <property type="entry name" value="GATASE"/>
</dbReference>
<dbReference type="InterPro" id="IPR001674">
    <property type="entry name" value="GMP_synth_C"/>
</dbReference>
<dbReference type="InterPro" id="IPR004739">
    <property type="entry name" value="GMP_synth_GATase"/>
</dbReference>
<dbReference type="InterPro" id="IPR022955">
    <property type="entry name" value="GMP_synthase"/>
</dbReference>
<dbReference type="InterPro" id="IPR025777">
    <property type="entry name" value="GMPS_ATP_PPase_dom"/>
</dbReference>
<dbReference type="InterPro" id="IPR022310">
    <property type="entry name" value="NAD/GMP_synthase"/>
</dbReference>
<dbReference type="InterPro" id="IPR014729">
    <property type="entry name" value="Rossmann-like_a/b/a_fold"/>
</dbReference>
<dbReference type="NCBIfam" id="TIGR00884">
    <property type="entry name" value="guaA_Cterm"/>
    <property type="match status" value="1"/>
</dbReference>
<dbReference type="NCBIfam" id="TIGR00888">
    <property type="entry name" value="guaA_Nterm"/>
    <property type="match status" value="1"/>
</dbReference>
<dbReference type="NCBIfam" id="NF000848">
    <property type="entry name" value="PRK00074.1"/>
    <property type="match status" value="1"/>
</dbReference>
<dbReference type="PANTHER" id="PTHR11922:SF2">
    <property type="entry name" value="GMP SYNTHASE [GLUTAMINE-HYDROLYZING]"/>
    <property type="match status" value="1"/>
</dbReference>
<dbReference type="PANTHER" id="PTHR11922">
    <property type="entry name" value="GMP SYNTHASE-RELATED"/>
    <property type="match status" value="1"/>
</dbReference>
<dbReference type="Pfam" id="PF00117">
    <property type="entry name" value="GATase"/>
    <property type="match status" value="1"/>
</dbReference>
<dbReference type="Pfam" id="PF00958">
    <property type="entry name" value="GMP_synt_C"/>
    <property type="match status" value="1"/>
</dbReference>
<dbReference type="Pfam" id="PF02540">
    <property type="entry name" value="NAD_synthase"/>
    <property type="match status" value="1"/>
</dbReference>
<dbReference type="PRINTS" id="PR00099">
    <property type="entry name" value="CPSGATASE"/>
</dbReference>
<dbReference type="PRINTS" id="PR00096">
    <property type="entry name" value="GATASE"/>
</dbReference>
<dbReference type="SUPFAM" id="SSF52402">
    <property type="entry name" value="Adenine nucleotide alpha hydrolases-like"/>
    <property type="match status" value="1"/>
</dbReference>
<dbReference type="SUPFAM" id="SSF52317">
    <property type="entry name" value="Class I glutamine amidotransferase-like"/>
    <property type="match status" value="1"/>
</dbReference>
<dbReference type="PROSITE" id="PS51273">
    <property type="entry name" value="GATASE_TYPE_1"/>
    <property type="match status" value="1"/>
</dbReference>
<dbReference type="PROSITE" id="PS51553">
    <property type="entry name" value="GMPS_ATP_PPASE"/>
    <property type="match status" value="1"/>
</dbReference>